<organism>
    <name type="scientific">Pseudoalteromonas translucida (strain TAC 125)</name>
    <dbReference type="NCBI Taxonomy" id="326442"/>
    <lineage>
        <taxon>Bacteria</taxon>
        <taxon>Pseudomonadati</taxon>
        <taxon>Pseudomonadota</taxon>
        <taxon>Gammaproteobacteria</taxon>
        <taxon>Alteromonadales</taxon>
        <taxon>Pseudoalteromonadaceae</taxon>
        <taxon>Pseudoalteromonas</taxon>
    </lineage>
</organism>
<dbReference type="EC" id="3.6.4.-" evidence="1"/>
<dbReference type="EMBL" id="CR954246">
    <property type="protein sequence ID" value="CAI86945.1"/>
    <property type="molecule type" value="Genomic_DNA"/>
</dbReference>
<dbReference type="SMR" id="Q3IIJ2"/>
<dbReference type="STRING" id="326442.PSHAa1875"/>
<dbReference type="KEGG" id="pha:PSHAa1875"/>
<dbReference type="PATRIC" id="fig|326442.8.peg.1820"/>
<dbReference type="eggNOG" id="COG2255">
    <property type="taxonomic scope" value="Bacteria"/>
</dbReference>
<dbReference type="HOGENOM" id="CLU_055599_1_0_6"/>
<dbReference type="BioCyc" id="PHAL326442:PSHA_RS09230-MONOMER"/>
<dbReference type="Proteomes" id="UP000006843">
    <property type="component" value="Chromosome I"/>
</dbReference>
<dbReference type="GO" id="GO:0005737">
    <property type="term" value="C:cytoplasm"/>
    <property type="evidence" value="ECO:0007669"/>
    <property type="project" value="UniProtKB-SubCell"/>
</dbReference>
<dbReference type="GO" id="GO:0048476">
    <property type="term" value="C:Holliday junction resolvase complex"/>
    <property type="evidence" value="ECO:0007669"/>
    <property type="project" value="UniProtKB-UniRule"/>
</dbReference>
<dbReference type="GO" id="GO:0005524">
    <property type="term" value="F:ATP binding"/>
    <property type="evidence" value="ECO:0007669"/>
    <property type="project" value="UniProtKB-UniRule"/>
</dbReference>
<dbReference type="GO" id="GO:0016887">
    <property type="term" value="F:ATP hydrolysis activity"/>
    <property type="evidence" value="ECO:0007669"/>
    <property type="project" value="InterPro"/>
</dbReference>
<dbReference type="GO" id="GO:0000400">
    <property type="term" value="F:four-way junction DNA binding"/>
    <property type="evidence" value="ECO:0007669"/>
    <property type="project" value="UniProtKB-UniRule"/>
</dbReference>
<dbReference type="GO" id="GO:0009378">
    <property type="term" value="F:four-way junction helicase activity"/>
    <property type="evidence" value="ECO:0007669"/>
    <property type="project" value="InterPro"/>
</dbReference>
<dbReference type="GO" id="GO:0006310">
    <property type="term" value="P:DNA recombination"/>
    <property type="evidence" value="ECO:0007669"/>
    <property type="project" value="UniProtKB-UniRule"/>
</dbReference>
<dbReference type="GO" id="GO:0006281">
    <property type="term" value="P:DNA repair"/>
    <property type="evidence" value="ECO:0007669"/>
    <property type="project" value="UniProtKB-UniRule"/>
</dbReference>
<dbReference type="CDD" id="cd00009">
    <property type="entry name" value="AAA"/>
    <property type="match status" value="1"/>
</dbReference>
<dbReference type="FunFam" id="1.10.10.10:FF:000086">
    <property type="entry name" value="Holliday junction ATP-dependent DNA helicase RuvB"/>
    <property type="match status" value="1"/>
</dbReference>
<dbReference type="FunFam" id="1.10.8.60:FF:000023">
    <property type="entry name" value="Holliday junction ATP-dependent DNA helicase RuvB"/>
    <property type="match status" value="1"/>
</dbReference>
<dbReference type="FunFam" id="3.40.50.300:FF:000073">
    <property type="entry name" value="Holliday junction ATP-dependent DNA helicase RuvB"/>
    <property type="match status" value="1"/>
</dbReference>
<dbReference type="Gene3D" id="1.10.8.60">
    <property type="match status" value="1"/>
</dbReference>
<dbReference type="Gene3D" id="3.40.50.300">
    <property type="entry name" value="P-loop containing nucleotide triphosphate hydrolases"/>
    <property type="match status" value="1"/>
</dbReference>
<dbReference type="Gene3D" id="1.10.10.10">
    <property type="entry name" value="Winged helix-like DNA-binding domain superfamily/Winged helix DNA-binding domain"/>
    <property type="match status" value="1"/>
</dbReference>
<dbReference type="HAMAP" id="MF_00016">
    <property type="entry name" value="DNA_HJ_migration_RuvB"/>
    <property type="match status" value="1"/>
</dbReference>
<dbReference type="InterPro" id="IPR003593">
    <property type="entry name" value="AAA+_ATPase"/>
</dbReference>
<dbReference type="InterPro" id="IPR041445">
    <property type="entry name" value="AAA_lid_4"/>
</dbReference>
<dbReference type="InterPro" id="IPR004605">
    <property type="entry name" value="DNA_helicase_Holl-junc_RuvB"/>
</dbReference>
<dbReference type="InterPro" id="IPR027417">
    <property type="entry name" value="P-loop_NTPase"/>
</dbReference>
<dbReference type="InterPro" id="IPR008824">
    <property type="entry name" value="RuvB-like_N"/>
</dbReference>
<dbReference type="InterPro" id="IPR008823">
    <property type="entry name" value="RuvB_C"/>
</dbReference>
<dbReference type="InterPro" id="IPR036388">
    <property type="entry name" value="WH-like_DNA-bd_sf"/>
</dbReference>
<dbReference type="InterPro" id="IPR036390">
    <property type="entry name" value="WH_DNA-bd_sf"/>
</dbReference>
<dbReference type="NCBIfam" id="NF000868">
    <property type="entry name" value="PRK00080.1"/>
    <property type="match status" value="1"/>
</dbReference>
<dbReference type="NCBIfam" id="TIGR00635">
    <property type="entry name" value="ruvB"/>
    <property type="match status" value="1"/>
</dbReference>
<dbReference type="PANTHER" id="PTHR42848">
    <property type="match status" value="1"/>
</dbReference>
<dbReference type="PANTHER" id="PTHR42848:SF1">
    <property type="entry name" value="HOLLIDAY JUNCTION BRANCH MIGRATION COMPLEX SUBUNIT RUVB"/>
    <property type="match status" value="1"/>
</dbReference>
<dbReference type="Pfam" id="PF17864">
    <property type="entry name" value="AAA_lid_4"/>
    <property type="match status" value="1"/>
</dbReference>
<dbReference type="Pfam" id="PF05491">
    <property type="entry name" value="RuvB_C"/>
    <property type="match status" value="1"/>
</dbReference>
<dbReference type="Pfam" id="PF05496">
    <property type="entry name" value="RuvB_N"/>
    <property type="match status" value="1"/>
</dbReference>
<dbReference type="SMART" id="SM00382">
    <property type="entry name" value="AAA"/>
    <property type="match status" value="1"/>
</dbReference>
<dbReference type="SUPFAM" id="SSF52540">
    <property type="entry name" value="P-loop containing nucleoside triphosphate hydrolases"/>
    <property type="match status" value="1"/>
</dbReference>
<dbReference type="SUPFAM" id="SSF46785">
    <property type="entry name" value="Winged helix' DNA-binding domain"/>
    <property type="match status" value="1"/>
</dbReference>
<keyword id="KW-0067">ATP-binding</keyword>
<keyword id="KW-0963">Cytoplasm</keyword>
<keyword id="KW-0227">DNA damage</keyword>
<keyword id="KW-0233">DNA recombination</keyword>
<keyword id="KW-0234">DNA repair</keyword>
<keyword id="KW-0238">DNA-binding</keyword>
<keyword id="KW-0378">Hydrolase</keyword>
<keyword id="KW-0547">Nucleotide-binding</keyword>
<keyword id="KW-1185">Reference proteome</keyword>
<proteinExistence type="inferred from homology"/>
<comment type="function">
    <text evidence="1">The RuvA-RuvB-RuvC complex processes Holliday junction (HJ) DNA during genetic recombination and DNA repair, while the RuvA-RuvB complex plays an important role in the rescue of blocked DNA replication forks via replication fork reversal (RFR). RuvA specifically binds to HJ cruciform DNA, conferring on it an open structure. The RuvB hexamer acts as an ATP-dependent pump, pulling dsDNA into and through the RuvAB complex. RuvB forms 2 homohexamers on either side of HJ DNA bound by 1 or 2 RuvA tetramers; 4 subunits per hexamer contact DNA at a time. Coordinated motions by a converter formed by DNA-disengaged RuvB subunits stimulates ATP hydrolysis and nucleotide exchange. Immobilization of the converter enables RuvB to convert the ATP-contained energy into a lever motion, pulling 2 nucleotides of DNA out of the RuvA tetramer per ATP hydrolyzed, thus driving DNA branch migration. The RuvB motors rotate together with the DNA substrate, which together with the progressing nucleotide cycle form the mechanistic basis for DNA recombination by continuous HJ branch migration. Branch migration allows RuvC to scan DNA until it finds its consensus sequence, where it cleaves and resolves cruciform DNA.</text>
</comment>
<comment type="catalytic activity">
    <reaction evidence="1">
        <text>ATP + H2O = ADP + phosphate + H(+)</text>
        <dbReference type="Rhea" id="RHEA:13065"/>
        <dbReference type="ChEBI" id="CHEBI:15377"/>
        <dbReference type="ChEBI" id="CHEBI:15378"/>
        <dbReference type="ChEBI" id="CHEBI:30616"/>
        <dbReference type="ChEBI" id="CHEBI:43474"/>
        <dbReference type="ChEBI" id="CHEBI:456216"/>
    </reaction>
</comment>
<comment type="subunit">
    <text evidence="1">Homohexamer. Forms an RuvA(8)-RuvB(12)-Holliday junction (HJ) complex. HJ DNA is sandwiched between 2 RuvA tetramers; dsDNA enters through RuvA and exits via RuvB. An RuvB hexamer assembles on each DNA strand where it exits the tetramer. Each RuvB hexamer is contacted by two RuvA subunits (via domain III) on 2 adjacent RuvB subunits; this complex drives branch migration. In the full resolvosome a probable DNA-RuvA(4)-RuvB(12)-RuvC(2) complex forms which resolves the HJ.</text>
</comment>
<comment type="subcellular location">
    <subcellularLocation>
        <location evidence="1">Cytoplasm</location>
    </subcellularLocation>
</comment>
<comment type="domain">
    <text evidence="1">Has 3 domains, the large (RuvB-L) and small ATPase (RuvB-S) domains and the C-terminal head (RuvB-H) domain. The head domain binds DNA, while the ATPase domains jointly bind ATP, ADP or are empty depending on the state of the subunit in the translocation cycle. During a single DNA translocation step the structure of each domain remains the same, but their relative positions change.</text>
</comment>
<comment type="similarity">
    <text evidence="1">Belongs to the RuvB family.</text>
</comment>
<feature type="chain" id="PRO_0000235390" description="Holliday junction branch migration complex subunit RuvB">
    <location>
        <begin position="1"/>
        <end position="335"/>
    </location>
</feature>
<feature type="region of interest" description="Large ATPase domain (RuvB-L)" evidence="1">
    <location>
        <begin position="4"/>
        <end position="184"/>
    </location>
</feature>
<feature type="region of interest" description="Small ATPAse domain (RuvB-S)" evidence="1">
    <location>
        <begin position="185"/>
        <end position="255"/>
    </location>
</feature>
<feature type="region of interest" description="Head domain (RuvB-H)" evidence="1">
    <location>
        <begin position="258"/>
        <end position="335"/>
    </location>
</feature>
<feature type="binding site" evidence="1">
    <location>
        <position position="23"/>
    </location>
    <ligand>
        <name>ATP</name>
        <dbReference type="ChEBI" id="CHEBI:30616"/>
    </ligand>
</feature>
<feature type="binding site" evidence="1">
    <location>
        <position position="24"/>
    </location>
    <ligand>
        <name>ATP</name>
        <dbReference type="ChEBI" id="CHEBI:30616"/>
    </ligand>
</feature>
<feature type="binding site" evidence="1">
    <location>
        <position position="65"/>
    </location>
    <ligand>
        <name>ATP</name>
        <dbReference type="ChEBI" id="CHEBI:30616"/>
    </ligand>
</feature>
<feature type="binding site" evidence="1">
    <location>
        <position position="68"/>
    </location>
    <ligand>
        <name>ATP</name>
        <dbReference type="ChEBI" id="CHEBI:30616"/>
    </ligand>
</feature>
<feature type="binding site" evidence="1">
    <location>
        <position position="69"/>
    </location>
    <ligand>
        <name>ATP</name>
        <dbReference type="ChEBI" id="CHEBI:30616"/>
    </ligand>
</feature>
<feature type="binding site" evidence="1">
    <location>
        <position position="69"/>
    </location>
    <ligand>
        <name>Mg(2+)</name>
        <dbReference type="ChEBI" id="CHEBI:18420"/>
    </ligand>
</feature>
<feature type="binding site" evidence="1">
    <location>
        <position position="70"/>
    </location>
    <ligand>
        <name>ATP</name>
        <dbReference type="ChEBI" id="CHEBI:30616"/>
    </ligand>
</feature>
<feature type="binding site" evidence="1">
    <location>
        <begin position="131"/>
        <end position="133"/>
    </location>
    <ligand>
        <name>ATP</name>
        <dbReference type="ChEBI" id="CHEBI:30616"/>
    </ligand>
</feature>
<feature type="binding site" evidence="1">
    <location>
        <position position="174"/>
    </location>
    <ligand>
        <name>ATP</name>
        <dbReference type="ChEBI" id="CHEBI:30616"/>
    </ligand>
</feature>
<feature type="binding site" evidence="1">
    <location>
        <position position="184"/>
    </location>
    <ligand>
        <name>ATP</name>
        <dbReference type="ChEBI" id="CHEBI:30616"/>
    </ligand>
</feature>
<feature type="binding site" evidence="1">
    <location>
        <position position="221"/>
    </location>
    <ligand>
        <name>ATP</name>
        <dbReference type="ChEBI" id="CHEBI:30616"/>
    </ligand>
</feature>
<feature type="binding site" evidence="1">
    <location>
        <position position="313"/>
    </location>
    <ligand>
        <name>DNA</name>
        <dbReference type="ChEBI" id="CHEBI:16991"/>
    </ligand>
</feature>
<feature type="binding site" evidence="1">
    <location>
        <position position="318"/>
    </location>
    <ligand>
        <name>DNA</name>
        <dbReference type="ChEBI" id="CHEBI:16991"/>
    </ligand>
</feature>
<name>RUVB_PSET1</name>
<accession>Q3IIJ2</accession>
<protein>
    <recommendedName>
        <fullName evidence="1">Holliday junction branch migration complex subunit RuvB</fullName>
        <ecNumber evidence="1">3.6.4.-</ecNumber>
    </recommendedName>
</protein>
<sequence>MIEADRLIDATEKPNEDSIDRAIRPKLLADYRGQPHVKQQMEIFIEAARSRGEALDHLLIFGPPGLGKTTLANIVANELQVNIKATSGPVLEKAGDLAALLTNLEEGDVLFIDEIHRLSPQVEEILYPAMEDYQLDIMIGEGPAARSIKLDLPSFTLIGATTRAGSLTSPLRDRFGIVQRLEFYSVEDLSYIVGRSAHFLDLEMCDEGAVEIAKRSRGTPRIANRLLRRVRDYTQVKSDGTVNAEVAELALNMIDVDKSGFDYMDRKYLLAIIEKFMGGPVGLDNIAAAIGEEKETIEDVIEPFLIQQGFIQRTPRGRIVSDNAYHHFGLLPKQD</sequence>
<evidence type="ECO:0000255" key="1">
    <source>
        <dbReference type="HAMAP-Rule" id="MF_00016"/>
    </source>
</evidence>
<reference key="1">
    <citation type="journal article" date="2005" name="Genome Res.">
        <title>Coping with cold: the genome of the versatile marine Antarctica bacterium Pseudoalteromonas haloplanktis TAC125.</title>
        <authorList>
            <person name="Medigue C."/>
            <person name="Krin E."/>
            <person name="Pascal G."/>
            <person name="Barbe V."/>
            <person name="Bernsel A."/>
            <person name="Bertin P.N."/>
            <person name="Cheung F."/>
            <person name="Cruveiller S."/>
            <person name="D'Amico S."/>
            <person name="Duilio A."/>
            <person name="Fang G."/>
            <person name="Feller G."/>
            <person name="Ho C."/>
            <person name="Mangenot S."/>
            <person name="Marino G."/>
            <person name="Nilsson J."/>
            <person name="Parrilli E."/>
            <person name="Rocha E.P.C."/>
            <person name="Rouy Z."/>
            <person name="Sekowska A."/>
            <person name="Tutino M.L."/>
            <person name="Vallenet D."/>
            <person name="von Heijne G."/>
            <person name="Danchin A."/>
        </authorList>
    </citation>
    <scope>NUCLEOTIDE SEQUENCE [LARGE SCALE GENOMIC DNA]</scope>
    <source>
        <strain>TAC 125</strain>
    </source>
</reference>
<gene>
    <name evidence="1" type="primary">ruvB</name>
    <name type="ordered locus">PSHAa1875</name>
</gene>